<protein>
    <recommendedName>
        <fullName evidence="1">Probable endonuclease 4</fullName>
        <ecNumber evidence="1">3.1.21.2</ecNumber>
    </recommendedName>
    <alternativeName>
        <fullName evidence="1">Endodeoxyribonuclease IV</fullName>
    </alternativeName>
    <alternativeName>
        <fullName evidence="1">Endonuclease IV</fullName>
    </alternativeName>
</protein>
<proteinExistence type="inferred from homology"/>
<organism>
    <name type="scientific">Buchnera aphidicola subsp. Schizaphis graminum (strain Sg)</name>
    <dbReference type="NCBI Taxonomy" id="198804"/>
    <lineage>
        <taxon>Bacteria</taxon>
        <taxon>Pseudomonadati</taxon>
        <taxon>Pseudomonadota</taxon>
        <taxon>Gammaproteobacteria</taxon>
        <taxon>Enterobacterales</taxon>
        <taxon>Erwiniaceae</taxon>
        <taxon>Buchnera</taxon>
    </lineage>
</organism>
<accession>P59058</accession>
<accession>Q8KA04</accession>
<dbReference type="EC" id="3.1.21.2" evidence="1"/>
<dbReference type="EMBL" id="AE013218">
    <property type="protein sequence ID" value="AAM67698.1"/>
    <property type="molecule type" value="Genomic_DNA"/>
</dbReference>
<dbReference type="RefSeq" id="WP_011053665.1">
    <property type="nucleotide sequence ID" value="NC_004061.1"/>
</dbReference>
<dbReference type="SMR" id="P59058"/>
<dbReference type="STRING" id="198804.BUsg_130"/>
<dbReference type="GeneID" id="93003600"/>
<dbReference type="KEGG" id="bas:BUsg_130"/>
<dbReference type="eggNOG" id="COG0648">
    <property type="taxonomic scope" value="Bacteria"/>
</dbReference>
<dbReference type="HOGENOM" id="CLU_025885_0_4_6"/>
<dbReference type="Proteomes" id="UP000000416">
    <property type="component" value="Chromosome"/>
</dbReference>
<dbReference type="GO" id="GO:0008833">
    <property type="term" value="F:deoxyribonuclease IV (phage-T4-induced) activity"/>
    <property type="evidence" value="ECO:0007669"/>
    <property type="project" value="UniProtKB-UniRule"/>
</dbReference>
<dbReference type="GO" id="GO:0003677">
    <property type="term" value="F:DNA binding"/>
    <property type="evidence" value="ECO:0007669"/>
    <property type="project" value="InterPro"/>
</dbReference>
<dbReference type="GO" id="GO:0003906">
    <property type="term" value="F:DNA-(apurinic or apyrimidinic site) endonuclease activity"/>
    <property type="evidence" value="ECO:0007669"/>
    <property type="project" value="TreeGrafter"/>
</dbReference>
<dbReference type="GO" id="GO:0008081">
    <property type="term" value="F:phosphoric diester hydrolase activity"/>
    <property type="evidence" value="ECO:0007669"/>
    <property type="project" value="TreeGrafter"/>
</dbReference>
<dbReference type="GO" id="GO:0008270">
    <property type="term" value="F:zinc ion binding"/>
    <property type="evidence" value="ECO:0007669"/>
    <property type="project" value="UniProtKB-UniRule"/>
</dbReference>
<dbReference type="GO" id="GO:0006284">
    <property type="term" value="P:base-excision repair"/>
    <property type="evidence" value="ECO:0007669"/>
    <property type="project" value="TreeGrafter"/>
</dbReference>
<dbReference type="CDD" id="cd00019">
    <property type="entry name" value="AP2Ec"/>
    <property type="match status" value="1"/>
</dbReference>
<dbReference type="FunFam" id="3.20.20.150:FF:000001">
    <property type="entry name" value="Probable endonuclease 4"/>
    <property type="match status" value="1"/>
</dbReference>
<dbReference type="Gene3D" id="3.20.20.150">
    <property type="entry name" value="Divalent-metal-dependent TIM barrel enzymes"/>
    <property type="match status" value="1"/>
</dbReference>
<dbReference type="HAMAP" id="MF_00152">
    <property type="entry name" value="Nfo"/>
    <property type="match status" value="1"/>
</dbReference>
<dbReference type="InterPro" id="IPR001719">
    <property type="entry name" value="AP_endonuc_2"/>
</dbReference>
<dbReference type="InterPro" id="IPR018246">
    <property type="entry name" value="AP_endonuc_F2_Zn_BS"/>
</dbReference>
<dbReference type="InterPro" id="IPR036237">
    <property type="entry name" value="Xyl_isomerase-like_sf"/>
</dbReference>
<dbReference type="InterPro" id="IPR013022">
    <property type="entry name" value="Xyl_isomerase-like_TIM-brl"/>
</dbReference>
<dbReference type="NCBIfam" id="TIGR00587">
    <property type="entry name" value="nfo"/>
    <property type="match status" value="1"/>
</dbReference>
<dbReference type="NCBIfam" id="NF002199">
    <property type="entry name" value="PRK01060.1-4"/>
    <property type="match status" value="1"/>
</dbReference>
<dbReference type="PANTHER" id="PTHR21445:SF0">
    <property type="entry name" value="APURINIC-APYRIMIDINIC ENDONUCLEASE"/>
    <property type="match status" value="1"/>
</dbReference>
<dbReference type="PANTHER" id="PTHR21445">
    <property type="entry name" value="ENDONUCLEASE IV ENDODEOXYRIBONUCLEASE IV"/>
    <property type="match status" value="1"/>
</dbReference>
<dbReference type="Pfam" id="PF01261">
    <property type="entry name" value="AP_endonuc_2"/>
    <property type="match status" value="1"/>
</dbReference>
<dbReference type="SMART" id="SM00518">
    <property type="entry name" value="AP2Ec"/>
    <property type="match status" value="1"/>
</dbReference>
<dbReference type="SUPFAM" id="SSF51658">
    <property type="entry name" value="Xylose isomerase-like"/>
    <property type="match status" value="1"/>
</dbReference>
<dbReference type="PROSITE" id="PS00729">
    <property type="entry name" value="AP_NUCLEASE_F2_1"/>
    <property type="match status" value="1"/>
</dbReference>
<dbReference type="PROSITE" id="PS00730">
    <property type="entry name" value="AP_NUCLEASE_F2_2"/>
    <property type="match status" value="1"/>
</dbReference>
<dbReference type="PROSITE" id="PS00731">
    <property type="entry name" value="AP_NUCLEASE_F2_3"/>
    <property type="match status" value="1"/>
</dbReference>
<dbReference type="PROSITE" id="PS51432">
    <property type="entry name" value="AP_NUCLEASE_F2_4"/>
    <property type="match status" value="1"/>
</dbReference>
<evidence type="ECO:0000255" key="1">
    <source>
        <dbReference type="HAMAP-Rule" id="MF_00152"/>
    </source>
</evidence>
<gene>
    <name evidence="1" type="primary">nfo</name>
    <name type="ordered locus">BUsg_130</name>
</gene>
<keyword id="KW-0227">DNA damage</keyword>
<keyword id="KW-0234">DNA repair</keyword>
<keyword id="KW-0255">Endonuclease</keyword>
<keyword id="KW-0378">Hydrolase</keyword>
<keyword id="KW-0479">Metal-binding</keyword>
<keyword id="KW-0540">Nuclease</keyword>
<keyword id="KW-0862">Zinc</keyword>
<sequence>MNYIGAHVSSSGGLEKAVFRAFQIKATTFSFFTKNQRQWISLPLQKKNIEDFKKACIKYNFSPEKILPHSSYLINLGHPIDFFLEKSRVAFIDEIVRCDQLGLRFLNFHPGSHLNKISEVTCLSRISESINIALEKTKNVVAVIENTAGQGTNIGYRFEHLYEIIKKIDDKSRIGVCIDTCHLFASGYDLRTKIDYESTFNKFFDLIEMKYLKGFHLNDSKKQFNSRVDRHENLGLGEIGKSVFKWIIKNKNFHNIPMILETINPKLWEKEIDWLRSLQ</sequence>
<name>END4_BUCAP</name>
<reference key="1">
    <citation type="journal article" date="2002" name="Science">
        <title>50 million years of genomic stasis in endosymbiotic bacteria.</title>
        <authorList>
            <person name="Tamas I."/>
            <person name="Klasson L."/>
            <person name="Canbaeck B."/>
            <person name="Naeslund A.K."/>
            <person name="Eriksson A.-S."/>
            <person name="Wernegreen J.J."/>
            <person name="Sandstroem J.P."/>
            <person name="Moran N.A."/>
            <person name="Andersson S.G.E."/>
        </authorList>
    </citation>
    <scope>NUCLEOTIDE SEQUENCE [LARGE SCALE GENOMIC DNA]</scope>
    <source>
        <strain>Sg</strain>
    </source>
</reference>
<comment type="function">
    <text evidence="1">Endonuclease IV plays a role in DNA repair. It cleaves phosphodiester bonds at apurinic or apyrimidinic (AP) sites, generating a 3'-hydroxyl group and a 5'-terminal sugar phosphate.</text>
</comment>
<comment type="catalytic activity">
    <reaction evidence="1">
        <text>Endonucleolytic cleavage to 5'-phosphooligonucleotide end-products.</text>
        <dbReference type="EC" id="3.1.21.2"/>
    </reaction>
</comment>
<comment type="cofactor">
    <cofactor evidence="1">
        <name>Zn(2+)</name>
        <dbReference type="ChEBI" id="CHEBI:29105"/>
    </cofactor>
    <text evidence="1">Binds 3 Zn(2+) ions.</text>
</comment>
<comment type="similarity">
    <text evidence="1">Belongs to the AP endonuclease 2 family.</text>
</comment>
<feature type="chain" id="PRO_0000190829" description="Probable endonuclease 4">
    <location>
        <begin position="1"/>
        <end position="279"/>
    </location>
</feature>
<feature type="binding site" evidence="1">
    <location>
        <position position="69"/>
    </location>
    <ligand>
        <name>Zn(2+)</name>
        <dbReference type="ChEBI" id="CHEBI:29105"/>
        <label>1</label>
    </ligand>
</feature>
<feature type="binding site" evidence="1">
    <location>
        <position position="109"/>
    </location>
    <ligand>
        <name>Zn(2+)</name>
        <dbReference type="ChEBI" id="CHEBI:29105"/>
        <label>1</label>
    </ligand>
</feature>
<feature type="binding site" evidence="1">
    <location>
        <position position="145"/>
    </location>
    <ligand>
        <name>Zn(2+)</name>
        <dbReference type="ChEBI" id="CHEBI:29105"/>
        <label>1</label>
    </ligand>
</feature>
<feature type="binding site" evidence="1">
    <location>
        <position position="145"/>
    </location>
    <ligand>
        <name>Zn(2+)</name>
        <dbReference type="ChEBI" id="CHEBI:29105"/>
        <label>2</label>
    </ligand>
</feature>
<feature type="binding site" evidence="1">
    <location>
        <position position="179"/>
    </location>
    <ligand>
        <name>Zn(2+)</name>
        <dbReference type="ChEBI" id="CHEBI:29105"/>
        <label>2</label>
    </ligand>
</feature>
<feature type="binding site" evidence="1">
    <location>
        <position position="182"/>
    </location>
    <ligand>
        <name>Zn(2+)</name>
        <dbReference type="ChEBI" id="CHEBI:29105"/>
        <label>3</label>
    </ligand>
</feature>
<feature type="binding site" evidence="1">
    <location>
        <position position="216"/>
    </location>
    <ligand>
        <name>Zn(2+)</name>
        <dbReference type="ChEBI" id="CHEBI:29105"/>
        <label>2</label>
    </ligand>
</feature>
<feature type="binding site" evidence="1">
    <location>
        <position position="229"/>
    </location>
    <ligand>
        <name>Zn(2+)</name>
        <dbReference type="ChEBI" id="CHEBI:29105"/>
        <label>3</label>
    </ligand>
</feature>
<feature type="binding site" evidence="1">
    <location>
        <position position="231"/>
    </location>
    <ligand>
        <name>Zn(2+)</name>
        <dbReference type="ChEBI" id="CHEBI:29105"/>
        <label>3</label>
    </ligand>
</feature>
<feature type="binding site" evidence="1">
    <location>
        <position position="261"/>
    </location>
    <ligand>
        <name>Zn(2+)</name>
        <dbReference type="ChEBI" id="CHEBI:29105"/>
        <label>2</label>
    </ligand>
</feature>